<reference key="1">
    <citation type="journal article" date="2008" name="PLoS ONE">
        <title>Genome biology of Actinobacillus pleuropneumoniae JL03, an isolate of serotype 3 prevalent in China.</title>
        <authorList>
            <person name="Xu Z."/>
            <person name="Zhou Y."/>
            <person name="Li L."/>
            <person name="Zhou R."/>
            <person name="Xiao S."/>
            <person name="Wan Y."/>
            <person name="Zhang S."/>
            <person name="Wang K."/>
            <person name="Li W."/>
            <person name="Li L."/>
            <person name="Jin H."/>
            <person name="Kang M."/>
            <person name="Dalai B."/>
            <person name="Li T."/>
            <person name="Liu L."/>
            <person name="Cheng Y."/>
            <person name="Zhang L."/>
            <person name="Xu T."/>
            <person name="Zheng H."/>
            <person name="Pu S."/>
            <person name="Wang B."/>
            <person name="Gu W."/>
            <person name="Zhang X.L."/>
            <person name="Zhu G.-F."/>
            <person name="Wang S."/>
            <person name="Zhao G.-P."/>
            <person name="Chen H."/>
        </authorList>
    </citation>
    <scope>NUCLEOTIDE SEQUENCE [LARGE SCALE GENOMIC DNA]</scope>
    <source>
        <strain>JL03</strain>
    </source>
</reference>
<comment type="function">
    <text evidence="1">Bidirectionally degrades single-stranded DNA into large acid-insoluble oligonucleotides, which are then degraded further into small acid-soluble oligonucleotides.</text>
</comment>
<comment type="catalytic activity">
    <reaction evidence="1">
        <text>Exonucleolytic cleavage in either 5'- to 3'- or 3'- to 5'-direction to yield nucleoside 5'-phosphates.</text>
        <dbReference type="EC" id="3.1.11.6"/>
    </reaction>
</comment>
<comment type="subunit">
    <text evidence="1">Heterooligomer composed of large and small subunits.</text>
</comment>
<comment type="subcellular location">
    <subcellularLocation>
        <location evidence="1">Cytoplasm</location>
    </subcellularLocation>
</comment>
<comment type="similarity">
    <text evidence="1">Belongs to the XseB family.</text>
</comment>
<feature type="chain" id="PRO_1000119892" description="Exodeoxyribonuclease 7 small subunit">
    <location>
        <begin position="1"/>
        <end position="74"/>
    </location>
</feature>
<protein>
    <recommendedName>
        <fullName evidence="1">Exodeoxyribonuclease 7 small subunit</fullName>
        <ecNumber evidence="1">3.1.11.6</ecNumber>
    </recommendedName>
    <alternativeName>
        <fullName evidence="1">Exodeoxyribonuclease VII small subunit</fullName>
        <shortName evidence="1">Exonuclease VII small subunit</shortName>
    </alternativeName>
</protein>
<organism>
    <name type="scientific">Actinobacillus pleuropneumoniae serotype 3 (strain JL03)</name>
    <dbReference type="NCBI Taxonomy" id="434271"/>
    <lineage>
        <taxon>Bacteria</taxon>
        <taxon>Pseudomonadati</taxon>
        <taxon>Pseudomonadota</taxon>
        <taxon>Gammaproteobacteria</taxon>
        <taxon>Pasteurellales</taxon>
        <taxon>Pasteurellaceae</taxon>
        <taxon>Actinobacillus</taxon>
    </lineage>
</organism>
<evidence type="ECO:0000255" key="1">
    <source>
        <dbReference type="HAMAP-Rule" id="MF_00337"/>
    </source>
</evidence>
<proteinExistence type="inferred from homology"/>
<gene>
    <name evidence="1" type="primary">xseB</name>
    <name type="ordered locus">APJL_0812</name>
</gene>
<keyword id="KW-0963">Cytoplasm</keyword>
<keyword id="KW-0269">Exonuclease</keyword>
<keyword id="KW-0378">Hydrolase</keyword>
<keyword id="KW-0540">Nuclease</keyword>
<name>EX7S_ACTPJ</name>
<sequence length="74" mass="8499">MAKKPTQDFESTLKELEAIVSHLETGELPLEEALNEFETAVKLVQQGQERLQKAEQRIQILLNKNDQAELSDYE</sequence>
<dbReference type="EC" id="3.1.11.6" evidence="1"/>
<dbReference type="EMBL" id="CP000687">
    <property type="protein sequence ID" value="ABY69372.1"/>
    <property type="molecule type" value="Genomic_DNA"/>
</dbReference>
<dbReference type="RefSeq" id="WP_005597261.1">
    <property type="nucleotide sequence ID" value="NC_010278.1"/>
</dbReference>
<dbReference type="SMR" id="B0BP87"/>
<dbReference type="GeneID" id="48598991"/>
<dbReference type="KEGG" id="apj:APJL_0812"/>
<dbReference type="HOGENOM" id="CLU_145918_3_3_6"/>
<dbReference type="Proteomes" id="UP000008547">
    <property type="component" value="Chromosome"/>
</dbReference>
<dbReference type="GO" id="GO:0005829">
    <property type="term" value="C:cytosol"/>
    <property type="evidence" value="ECO:0007669"/>
    <property type="project" value="TreeGrafter"/>
</dbReference>
<dbReference type="GO" id="GO:0009318">
    <property type="term" value="C:exodeoxyribonuclease VII complex"/>
    <property type="evidence" value="ECO:0007669"/>
    <property type="project" value="InterPro"/>
</dbReference>
<dbReference type="GO" id="GO:0008855">
    <property type="term" value="F:exodeoxyribonuclease VII activity"/>
    <property type="evidence" value="ECO:0007669"/>
    <property type="project" value="UniProtKB-UniRule"/>
</dbReference>
<dbReference type="GO" id="GO:0006308">
    <property type="term" value="P:DNA catabolic process"/>
    <property type="evidence" value="ECO:0007669"/>
    <property type="project" value="UniProtKB-UniRule"/>
</dbReference>
<dbReference type="Gene3D" id="1.10.287.1040">
    <property type="entry name" value="Exonuclease VII, small subunit"/>
    <property type="match status" value="1"/>
</dbReference>
<dbReference type="HAMAP" id="MF_00337">
    <property type="entry name" value="Exonuc_7_S"/>
    <property type="match status" value="1"/>
</dbReference>
<dbReference type="InterPro" id="IPR003761">
    <property type="entry name" value="Exonuc_VII_S"/>
</dbReference>
<dbReference type="InterPro" id="IPR037004">
    <property type="entry name" value="Exonuc_VII_ssu_sf"/>
</dbReference>
<dbReference type="NCBIfam" id="NF002137">
    <property type="entry name" value="PRK00977.1-1"/>
    <property type="match status" value="1"/>
</dbReference>
<dbReference type="NCBIfam" id="NF002140">
    <property type="entry name" value="PRK00977.1-4"/>
    <property type="match status" value="1"/>
</dbReference>
<dbReference type="NCBIfam" id="TIGR01280">
    <property type="entry name" value="xseB"/>
    <property type="match status" value="1"/>
</dbReference>
<dbReference type="PANTHER" id="PTHR34137">
    <property type="entry name" value="EXODEOXYRIBONUCLEASE 7 SMALL SUBUNIT"/>
    <property type="match status" value="1"/>
</dbReference>
<dbReference type="PANTHER" id="PTHR34137:SF1">
    <property type="entry name" value="EXODEOXYRIBONUCLEASE 7 SMALL SUBUNIT"/>
    <property type="match status" value="1"/>
</dbReference>
<dbReference type="Pfam" id="PF02609">
    <property type="entry name" value="Exonuc_VII_S"/>
    <property type="match status" value="1"/>
</dbReference>
<dbReference type="PIRSF" id="PIRSF006488">
    <property type="entry name" value="Exonuc_VII_S"/>
    <property type="match status" value="1"/>
</dbReference>
<dbReference type="SUPFAM" id="SSF116842">
    <property type="entry name" value="XseB-like"/>
    <property type="match status" value="1"/>
</dbReference>
<accession>B0BP87</accession>